<feature type="chain" id="PRO_0000013610" description="Putative hydroxypyruvate isomerase">
    <location>
        <begin position="1"/>
        <end position="264"/>
    </location>
</feature>
<feature type="active site" description="Proton donor/acceptor" evidence="2">
    <location>
        <position position="145"/>
    </location>
</feature>
<feature type="active site" description="Proton donor/acceptor" evidence="2">
    <location>
        <position position="243"/>
    </location>
</feature>
<protein>
    <recommendedName>
        <fullName>Putative hydroxypyruvate isomerase</fullName>
        <ecNumber>5.3.1.22</ecNumber>
    </recommendedName>
    <alternativeName>
        <fullName>GIP-like protein</fullName>
    </alternativeName>
    <alternativeName>
        <fullName>Transient receptor potential locus C protein</fullName>
    </alternativeName>
</protein>
<name>HYI_DROME</name>
<organism>
    <name type="scientific">Drosophila melanogaster</name>
    <name type="common">Fruit fly</name>
    <dbReference type="NCBI Taxonomy" id="7227"/>
    <lineage>
        <taxon>Eukaryota</taxon>
        <taxon>Metazoa</taxon>
        <taxon>Ecdysozoa</taxon>
        <taxon>Arthropoda</taxon>
        <taxon>Hexapoda</taxon>
        <taxon>Insecta</taxon>
        <taxon>Pterygota</taxon>
        <taxon>Neoptera</taxon>
        <taxon>Endopterygota</taxon>
        <taxon>Diptera</taxon>
        <taxon>Brachycera</taxon>
        <taxon>Muscomorpha</taxon>
        <taxon>Ephydroidea</taxon>
        <taxon>Drosophilidae</taxon>
        <taxon>Drosophila</taxon>
        <taxon>Sophophora</taxon>
    </lineage>
</organism>
<comment type="function">
    <text evidence="1">Catalyzes the reversible isomerization between hydroxypyruvate and 2-hydroxy-3-oxopropanoate (also termed tartronate semialdehyde).</text>
</comment>
<comment type="catalytic activity">
    <reaction>
        <text>3-hydroxypyruvate = 2-hydroxy-3-oxopropanoate</text>
        <dbReference type="Rhea" id="RHEA:11952"/>
        <dbReference type="ChEBI" id="CHEBI:17180"/>
        <dbReference type="ChEBI" id="CHEBI:57978"/>
        <dbReference type="EC" id="5.3.1.22"/>
    </reaction>
</comment>
<comment type="similarity">
    <text evidence="3">Belongs to the hyi family.</text>
</comment>
<sequence length="264" mass="29093">MALKFAANLNFLFTERATSIAERIRLAHQNGFRAVEIPYPEGETSDVVSAVKETGVVVSLVNLAFDKSDDQLRFGSTSVPGSEKLFRSQLDATIDFARQVNCGKIHLTAGLFKGGQESDYTKTYTANLKIAADSLRASKMIGVIEPINKYAVPGYYMNSYSKAAGILADVAADNIQLLADLYHLQHLHGNVSKTLEEYKALIGHFQIAQVPHRHEPDVSGELDYGFVFKALQEFGYDGWIGCEYKPKTTTVEGLGWVSKLGYTL</sequence>
<proteinExistence type="evidence at transcript level"/>
<reference key="1">
    <citation type="journal article" date="1987" name="Somat. Cell Mol. Genet.">
        <title>Overlapping transcription units in the transient receptor potential locus of Drosophila melanogaster.</title>
        <authorList>
            <person name="Wong F."/>
            <person name="Yuh Z.T."/>
            <person name="Schaefer E.L."/>
            <person name="Roop B.C."/>
            <person name="Ally A.H."/>
        </authorList>
    </citation>
    <scope>NUCLEOTIDE SEQUENCE [MRNA]</scope>
</reference>
<reference key="2">
    <citation type="journal article" date="2000" name="Science">
        <title>The genome sequence of Drosophila melanogaster.</title>
        <authorList>
            <person name="Adams M.D."/>
            <person name="Celniker S.E."/>
            <person name="Holt R.A."/>
            <person name="Evans C.A."/>
            <person name="Gocayne J.D."/>
            <person name="Amanatides P.G."/>
            <person name="Scherer S.E."/>
            <person name="Li P.W."/>
            <person name="Hoskins R.A."/>
            <person name="Galle R.F."/>
            <person name="George R.A."/>
            <person name="Lewis S.E."/>
            <person name="Richards S."/>
            <person name="Ashburner M."/>
            <person name="Henderson S.N."/>
            <person name="Sutton G.G."/>
            <person name="Wortman J.R."/>
            <person name="Yandell M.D."/>
            <person name="Zhang Q."/>
            <person name="Chen L.X."/>
            <person name="Brandon R.C."/>
            <person name="Rogers Y.-H.C."/>
            <person name="Blazej R.G."/>
            <person name="Champe M."/>
            <person name="Pfeiffer B.D."/>
            <person name="Wan K.H."/>
            <person name="Doyle C."/>
            <person name="Baxter E.G."/>
            <person name="Helt G."/>
            <person name="Nelson C.R."/>
            <person name="Miklos G.L.G."/>
            <person name="Abril J.F."/>
            <person name="Agbayani A."/>
            <person name="An H.-J."/>
            <person name="Andrews-Pfannkoch C."/>
            <person name="Baldwin D."/>
            <person name="Ballew R.M."/>
            <person name="Basu A."/>
            <person name="Baxendale J."/>
            <person name="Bayraktaroglu L."/>
            <person name="Beasley E.M."/>
            <person name="Beeson K.Y."/>
            <person name="Benos P.V."/>
            <person name="Berman B.P."/>
            <person name="Bhandari D."/>
            <person name="Bolshakov S."/>
            <person name="Borkova D."/>
            <person name="Botchan M.R."/>
            <person name="Bouck J."/>
            <person name="Brokstein P."/>
            <person name="Brottier P."/>
            <person name="Burtis K.C."/>
            <person name="Busam D.A."/>
            <person name="Butler H."/>
            <person name="Cadieu E."/>
            <person name="Center A."/>
            <person name="Chandra I."/>
            <person name="Cherry J.M."/>
            <person name="Cawley S."/>
            <person name="Dahlke C."/>
            <person name="Davenport L.B."/>
            <person name="Davies P."/>
            <person name="de Pablos B."/>
            <person name="Delcher A."/>
            <person name="Deng Z."/>
            <person name="Mays A.D."/>
            <person name="Dew I."/>
            <person name="Dietz S.M."/>
            <person name="Dodson K."/>
            <person name="Doup L.E."/>
            <person name="Downes M."/>
            <person name="Dugan-Rocha S."/>
            <person name="Dunkov B.C."/>
            <person name="Dunn P."/>
            <person name="Durbin K.J."/>
            <person name="Evangelista C.C."/>
            <person name="Ferraz C."/>
            <person name="Ferriera S."/>
            <person name="Fleischmann W."/>
            <person name="Fosler C."/>
            <person name="Gabrielian A.E."/>
            <person name="Garg N.S."/>
            <person name="Gelbart W.M."/>
            <person name="Glasser K."/>
            <person name="Glodek A."/>
            <person name="Gong F."/>
            <person name="Gorrell J.H."/>
            <person name="Gu Z."/>
            <person name="Guan P."/>
            <person name="Harris M."/>
            <person name="Harris N.L."/>
            <person name="Harvey D.A."/>
            <person name="Heiman T.J."/>
            <person name="Hernandez J.R."/>
            <person name="Houck J."/>
            <person name="Hostin D."/>
            <person name="Houston K.A."/>
            <person name="Howland T.J."/>
            <person name="Wei M.-H."/>
            <person name="Ibegwam C."/>
            <person name="Jalali M."/>
            <person name="Kalush F."/>
            <person name="Karpen G.H."/>
            <person name="Ke Z."/>
            <person name="Kennison J.A."/>
            <person name="Ketchum K.A."/>
            <person name="Kimmel B.E."/>
            <person name="Kodira C.D."/>
            <person name="Kraft C.L."/>
            <person name="Kravitz S."/>
            <person name="Kulp D."/>
            <person name="Lai Z."/>
            <person name="Lasko P."/>
            <person name="Lei Y."/>
            <person name="Levitsky A.A."/>
            <person name="Li J.H."/>
            <person name="Li Z."/>
            <person name="Liang Y."/>
            <person name="Lin X."/>
            <person name="Liu X."/>
            <person name="Mattei B."/>
            <person name="McIntosh T.C."/>
            <person name="McLeod M.P."/>
            <person name="McPherson D."/>
            <person name="Merkulov G."/>
            <person name="Milshina N.V."/>
            <person name="Mobarry C."/>
            <person name="Morris J."/>
            <person name="Moshrefi A."/>
            <person name="Mount S.M."/>
            <person name="Moy M."/>
            <person name="Murphy B."/>
            <person name="Murphy L."/>
            <person name="Muzny D.M."/>
            <person name="Nelson D.L."/>
            <person name="Nelson D.R."/>
            <person name="Nelson K.A."/>
            <person name="Nixon K."/>
            <person name="Nusskern D.R."/>
            <person name="Pacleb J.M."/>
            <person name="Palazzolo M."/>
            <person name="Pittman G.S."/>
            <person name="Pan S."/>
            <person name="Pollard J."/>
            <person name="Puri V."/>
            <person name="Reese M.G."/>
            <person name="Reinert K."/>
            <person name="Remington K."/>
            <person name="Saunders R.D.C."/>
            <person name="Scheeler F."/>
            <person name="Shen H."/>
            <person name="Shue B.C."/>
            <person name="Siden-Kiamos I."/>
            <person name="Simpson M."/>
            <person name="Skupski M.P."/>
            <person name="Smith T.J."/>
            <person name="Spier E."/>
            <person name="Spradling A.C."/>
            <person name="Stapleton M."/>
            <person name="Strong R."/>
            <person name="Sun E."/>
            <person name="Svirskas R."/>
            <person name="Tector C."/>
            <person name="Turner R."/>
            <person name="Venter E."/>
            <person name="Wang A.H."/>
            <person name="Wang X."/>
            <person name="Wang Z.-Y."/>
            <person name="Wassarman D.A."/>
            <person name="Weinstock G.M."/>
            <person name="Weissenbach J."/>
            <person name="Williams S.M."/>
            <person name="Woodage T."/>
            <person name="Worley K.C."/>
            <person name="Wu D."/>
            <person name="Yang S."/>
            <person name="Yao Q.A."/>
            <person name="Ye J."/>
            <person name="Yeh R.-F."/>
            <person name="Zaveri J.S."/>
            <person name="Zhan M."/>
            <person name="Zhang G."/>
            <person name="Zhao Q."/>
            <person name="Zheng L."/>
            <person name="Zheng X.H."/>
            <person name="Zhong F.N."/>
            <person name="Zhong W."/>
            <person name="Zhou X."/>
            <person name="Zhu S.C."/>
            <person name="Zhu X."/>
            <person name="Smith H.O."/>
            <person name="Gibbs R.A."/>
            <person name="Myers E.W."/>
            <person name="Rubin G.M."/>
            <person name="Venter J.C."/>
        </authorList>
    </citation>
    <scope>NUCLEOTIDE SEQUENCE [LARGE SCALE GENOMIC DNA]</scope>
    <source>
        <strain>Berkeley</strain>
    </source>
</reference>
<reference key="3">
    <citation type="journal article" date="2002" name="Genome Biol.">
        <title>Annotation of the Drosophila melanogaster euchromatic genome: a systematic review.</title>
        <authorList>
            <person name="Misra S."/>
            <person name="Crosby M.A."/>
            <person name="Mungall C.J."/>
            <person name="Matthews B.B."/>
            <person name="Campbell K.S."/>
            <person name="Hradecky P."/>
            <person name="Huang Y."/>
            <person name="Kaminker J.S."/>
            <person name="Millburn G.H."/>
            <person name="Prochnik S.E."/>
            <person name="Smith C.D."/>
            <person name="Tupy J.L."/>
            <person name="Whitfield E.J."/>
            <person name="Bayraktaroglu L."/>
            <person name="Berman B.P."/>
            <person name="Bettencourt B.R."/>
            <person name="Celniker S.E."/>
            <person name="de Grey A.D.N.J."/>
            <person name="Drysdale R.A."/>
            <person name="Harris N.L."/>
            <person name="Richter J."/>
            <person name="Russo S."/>
            <person name="Schroeder A.J."/>
            <person name="Shu S.Q."/>
            <person name="Stapleton M."/>
            <person name="Yamada C."/>
            <person name="Ashburner M."/>
            <person name="Gelbart W.M."/>
            <person name="Rubin G.M."/>
            <person name="Lewis S.E."/>
        </authorList>
    </citation>
    <scope>GENOME REANNOTATION</scope>
    <source>
        <strain>Berkeley</strain>
    </source>
</reference>
<reference key="4">
    <citation type="journal article" date="2002" name="Genome Biol.">
        <title>A Drosophila full-length cDNA resource.</title>
        <authorList>
            <person name="Stapleton M."/>
            <person name="Carlson J.W."/>
            <person name="Brokstein P."/>
            <person name="Yu C."/>
            <person name="Champe M."/>
            <person name="George R.A."/>
            <person name="Guarin H."/>
            <person name="Kronmiller B."/>
            <person name="Pacleb J.M."/>
            <person name="Park S."/>
            <person name="Wan K.H."/>
            <person name="Rubin G.M."/>
            <person name="Celniker S.E."/>
        </authorList>
    </citation>
    <scope>NUCLEOTIDE SEQUENCE [LARGE SCALE MRNA]</scope>
    <source>
        <strain>Berkeley</strain>
        <tissue>Embryo</tissue>
    </source>
</reference>
<evidence type="ECO:0000250" key="1"/>
<evidence type="ECO:0000250" key="2">
    <source>
        <dbReference type="UniProtKB" id="Q9WYP7"/>
    </source>
</evidence>
<evidence type="ECO:0000305" key="3"/>
<dbReference type="EC" id="5.3.1.22"/>
<dbReference type="EMBL" id="M18635">
    <property type="protein sequence ID" value="AAA28978.1"/>
    <property type="molecule type" value="mRNA"/>
</dbReference>
<dbReference type="EMBL" id="AE014298">
    <property type="protein sequence ID" value="AAF46573.1"/>
    <property type="molecule type" value="Genomic_DNA"/>
</dbReference>
<dbReference type="EMBL" id="AY071075">
    <property type="protein sequence ID" value="AAL48697.1"/>
    <property type="molecule type" value="mRNA"/>
</dbReference>
<dbReference type="PIR" id="S29144">
    <property type="entry name" value="S29144"/>
</dbReference>
<dbReference type="RefSeq" id="NP_511106.1">
    <property type="nucleotide sequence ID" value="NM_078551.4"/>
</dbReference>
<dbReference type="SMR" id="P36951"/>
<dbReference type="BioGRID" id="58392">
    <property type="interactions" value="13"/>
</dbReference>
<dbReference type="DIP" id="DIP-20018N"/>
<dbReference type="FunCoup" id="P36951">
    <property type="interactions" value="42"/>
</dbReference>
<dbReference type="IntAct" id="P36951">
    <property type="interactions" value="5"/>
</dbReference>
<dbReference type="STRING" id="7227.FBpp0071406"/>
<dbReference type="PaxDb" id="7227-FBpp0071406"/>
<dbReference type="DNASU" id="31960"/>
<dbReference type="EnsemblMetazoa" id="FBtr0071472">
    <property type="protein sequence ID" value="FBpp0071406"/>
    <property type="gene ID" value="FBgn0011770"/>
</dbReference>
<dbReference type="GeneID" id="31960"/>
<dbReference type="KEGG" id="dme:Dmel_CG2227"/>
<dbReference type="UCSC" id="CG2227-RA">
    <property type="organism name" value="d. melanogaster"/>
</dbReference>
<dbReference type="AGR" id="FB:FBgn0011770"/>
<dbReference type="CTD" id="2695"/>
<dbReference type="FlyBase" id="FBgn0011770">
    <property type="gene designation" value="Gip"/>
</dbReference>
<dbReference type="VEuPathDB" id="VectorBase:FBgn0011770"/>
<dbReference type="eggNOG" id="KOG4518">
    <property type="taxonomic scope" value="Eukaryota"/>
</dbReference>
<dbReference type="GeneTree" id="ENSGT00390000005462"/>
<dbReference type="HOGENOM" id="CLU_050006_1_1_1"/>
<dbReference type="InParanoid" id="P36951"/>
<dbReference type="OMA" id="CEYRPRA"/>
<dbReference type="OrthoDB" id="4214675at2759"/>
<dbReference type="PhylomeDB" id="P36951"/>
<dbReference type="BioGRID-ORCS" id="31960">
    <property type="hits" value="0 hits in 1 CRISPR screen"/>
</dbReference>
<dbReference type="ChiTaRS" id="Gip">
    <property type="organism name" value="fly"/>
</dbReference>
<dbReference type="GenomeRNAi" id="31960"/>
<dbReference type="PRO" id="PR:P36951"/>
<dbReference type="Proteomes" id="UP000000803">
    <property type="component" value="Chromosome X"/>
</dbReference>
<dbReference type="Bgee" id="FBgn0011770">
    <property type="expression patterns" value="Expressed in adult Malpighian tubule (Drosophila) and 111 other cell types or tissues"/>
</dbReference>
<dbReference type="GO" id="GO:0005576">
    <property type="term" value="C:extracellular region"/>
    <property type="evidence" value="ECO:0007005"/>
    <property type="project" value="FlyBase"/>
</dbReference>
<dbReference type="GO" id="GO:0008903">
    <property type="term" value="F:hydroxypyruvate isomerase activity"/>
    <property type="evidence" value="ECO:0000250"/>
    <property type="project" value="FlyBase"/>
</dbReference>
<dbReference type="GO" id="GO:0046487">
    <property type="term" value="P:glyoxylate metabolic process"/>
    <property type="evidence" value="ECO:0000250"/>
    <property type="project" value="FlyBase"/>
</dbReference>
<dbReference type="FunFam" id="3.20.20.150:FF:000007">
    <property type="entry name" value="Hydroxypyruvate isomerase"/>
    <property type="match status" value="1"/>
</dbReference>
<dbReference type="Gene3D" id="3.20.20.150">
    <property type="entry name" value="Divalent-metal-dependent TIM barrel enzymes"/>
    <property type="match status" value="1"/>
</dbReference>
<dbReference type="InterPro" id="IPR026040">
    <property type="entry name" value="HyI-like"/>
</dbReference>
<dbReference type="InterPro" id="IPR050417">
    <property type="entry name" value="Sugar_Epim/Isomerase"/>
</dbReference>
<dbReference type="InterPro" id="IPR036237">
    <property type="entry name" value="Xyl_isomerase-like_sf"/>
</dbReference>
<dbReference type="InterPro" id="IPR013022">
    <property type="entry name" value="Xyl_isomerase-like_TIM-brl"/>
</dbReference>
<dbReference type="PANTHER" id="PTHR43489:SF6">
    <property type="entry name" value="HYDROXYPYRUVATE ISOMERASE-RELATED"/>
    <property type="match status" value="1"/>
</dbReference>
<dbReference type="PANTHER" id="PTHR43489">
    <property type="entry name" value="ISOMERASE"/>
    <property type="match status" value="1"/>
</dbReference>
<dbReference type="Pfam" id="PF01261">
    <property type="entry name" value="AP_endonuc_2"/>
    <property type="match status" value="1"/>
</dbReference>
<dbReference type="PIRSF" id="PIRSF006241">
    <property type="entry name" value="HyI"/>
    <property type="match status" value="1"/>
</dbReference>
<dbReference type="SUPFAM" id="SSF51658">
    <property type="entry name" value="Xylose isomerase-like"/>
    <property type="match status" value="1"/>
</dbReference>
<gene>
    <name type="primary">Gip</name>
    <name type="ORF">CG2227</name>
</gene>
<keyword id="KW-0413">Isomerase</keyword>
<keyword id="KW-1185">Reference proteome</keyword>
<accession>P36951</accession>
<accession>Q9W2W4</accession>